<feature type="chain" id="PRO_0000462087" description="Smc-like protein Sph3">
    <location>
        <begin position="1"/>
        <end position="654"/>
    </location>
</feature>
<feature type="coiled-coil region" evidence="1">
    <location>
        <begin position="135"/>
        <end position="290"/>
    </location>
</feature>
<feature type="coiled-coil region" evidence="1">
    <location>
        <begin position="341"/>
        <end position="503"/>
    </location>
</feature>
<comment type="function">
    <text evidence="2">Involved in cell-shape determination (PubMed:38360755). Required for the formation of rods and wild-type-like motility (PubMed:38360755).</text>
</comment>
<comment type="disruption phenotype">
    <text evidence="2">The deletion mutant forms only disks across all growth phases and is non-motile.</text>
</comment>
<comment type="similarity">
    <text evidence="4">Belongs to the Sph1/Sph2 family.</text>
</comment>
<dbReference type="EMBL" id="CP001956">
    <property type="protein sequence ID" value="ADE03022.1"/>
    <property type="molecule type" value="Genomic_DNA"/>
</dbReference>
<dbReference type="RefSeq" id="WP_004042067.1">
    <property type="nucleotide sequence ID" value="NC_013967.1"/>
</dbReference>
<dbReference type="STRING" id="309800.HVO_2175"/>
<dbReference type="PaxDb" id="309800-C498_06168"/>
<dbReference type="EnsemblBacteria" id="ADE03022">
    <property type="protein sequence ID" value="ADE03022"/>
    <property type="gene ID" value="HVO_2175"/>
</dbReference>
<dbReference type="GeneID" id="8926388"/>
<dbReference type="KEGG" id="hvo:HVO_2175"/>
<dbReference type="PATRIC" id="fig|309800.29.peg.1202"/>
<dbReference type="eggNOG" id="arCOG00373">
    <property type="taxonomic scope" value="Archaea"/>
</dbReference>
<dbReference type="HOGENOM" id="CLU_409187_0_0_2"/>
<dbReference type="OrthoDB" id="241568at2157"/>
<dbReference type="Proteomes" id="UP000008243">
    <property type="component" value="Chromosome"/>
</dbReference>
<dbReference type="GO" id="GO:0016887">
    <property type="term" value="F:ATP hydrolysis activity"/>
    <property type="evidence" value="ECO:0007669"/>
    <property type="project" value="InterPro"/>
</dbReference>
<dbReference type="GO" id="GO:0006302">
    <property type="term" value="P:double-strand break repair"/>
    <property type="evidence" value="ECO:0007669"/>
    <property type="project" value="InterPro"/>
</dbReference>
<dbReference type="Gene3D" id="3.40.50.300">
    <property type="entry name" value="P-loop containing nucleotide triphosphate hydrolases"/>
    <property type="match status" value="2"/>
</dbReference>
<dbReference type="InterPro" id="IPR027417">
    <property type="entry name" value="P-loop_NTPase"/>
</dbReference>
<dbReference type="InterPro" id="IPR038729">
    <property type="entry name" value="Rad50/SbcC_AAA"/>
</dbReference>
<dbReference type="NCBIfam" id="NF045487">
    <property type="entry name" value="ASRP"/>
    <property type="match status" value="1"/>
</dbReference>
<dbReference type="PANTHER" id="PTHR32114">
    <property type="entry name" value="ABC TRANSPORTER ABCH.3"/>
    <property type="match status" value="1"/>
</dbReference>
<dbReference type="PANTHER" id="PTHR32114:SF2">
    <property type="entry name" value="ABC TRANSPORTER ABCH.3"/>
    <property type="match status" value="1"/>
</dbReference>
<dbReference type="Pfam" id="PF13476">
    <property type="entry name" value="AAA_23"/>
    <property type="match status" value="1"/>
</dbReference>
<dbReference type="SUPFAM" id="SSF52540">
    <property type="entry name" value="P-loop containing nucleoside triphosphate hydrolases"/>
    <property type="match status" value="1"/>
</dbReference>
<proteinExistence type="evidence at protein level"/>
<sequence>MNDSEALQAATVRIRNIGGIDERRVRLDPGVTVLTGRNATNRTSFLRALMGACGSDAISLKGDADEGSVELELDGRTYTRLLSRENGTVSTDGTPYLRDAATADRFAFLLGSNEARRAVVAERDLYDVIMSLVDTDAIEAEIERLQSRRTQVERRLDSLDSLDADRRSLESKRDDLEAEIEALEAERDDIEAEIEAEDRTVETQREHQAELDEVLSELQSARSDLESVRFRLQSERESVESLREERSELQSELDSFDAEAVDRGEASDRIESVRSRIESLNSTISELQTVVQYTEDVLDGKAGLVEDSLGADGDGSVTDQLVSSETTTCWTCGTEVDRDQIRGTTDRLREVRDEKREERAELRRELDELERSMRAAEQAERDRRKLRDKLRRLEDELDRRTGQIESLTDRREELAEQVDALEADASELRGQSGGEGDLIELHRELNEVEFALDRTRDDLASVHDELDELDDRFDEREELEREREQVNEELEAARTRIRSLTAAAVESFNEEMETVLDLLGYDNIERVWLERVERRVREGRRKVEKAQFELHIVRASDSGAVYEDSIDHLSESEREVVGLVFALAGYLVHEVYEEVPFMLLDSVEAIDAGRIAALVDHFEQYPTFLVAALLPEDAQALDASYRRVTWGTDVTPAA</sequence>
<keyword id="KW-0133">Cell shape</keyword>
<keyword id="KW-0175">Coiled coil</keyword>
<keyword id="KW-1185">Reference proteome</keyword>
<gene>
    <name evidence="3" type="primary">sph3</name>
    <name evidence="5" type="ordered locus">HVO_2175</name>
</gene>
<evidence type="ECO:0000255" key="1"/>
<evidence type="ECO:0000269" key="2">
    <source>
    </source>
</evidence>
<evidence type="ECO:0000303" key="3">
    <source>
    </source>
</evidence>
<evidence type="ECO:0000305" key="4"/>
<evidence type="ECO:0000312" key="5">
    <source>
        <dbReference type="EMBL" id="ADE03022.1"/>
    </source>
</evidence>
<organism>
    <name type="scientific">Haloferax volcanii (strain ATCC 29605 / DSM 3757 / JCM 8879 / NBRC 14742 / NCIMB 2012 / VKM B-1768 / DS2)</name>
    <name type="common">Halobacterium volcanii</name>
    <dbReference type="NCBI Taxonomy" id="309800"/>
    <lineage>
        <taxon>Archaea</taxon>
        <taxon>Methanobacteriati</taxon>
        <taxon>Methanobacteriota</taxon>
        <taxon>Stenosarchaea group</taxon>
        <taxon>Halobacteria</taxon>
        <taxon>Halobacteriales</taxon>
        <taxon>Haloferacaceae</taxon>
        <taxon>Haloferax</taxon>
    </lineage>
</organism>
<accession>D4GVA8</accession>
<accession>L9V8J6</accession>
<name>SPH3_HALVD</name>
<protein>
    <recommendedName>
        <fullName evidence="4">Smc-like protein Sph3</fullName>
    </recommendedName>
</protein>
<reference key="1">
    <citation type="journal article" date="2010" name="PLoS ONE">
        <title>The complete genome sequence of Haloferax volcanii DS2, a model archaeon.</title>
        <authorList>
            <person name="Hartman A.L."/>
            <person name="Norais C."/>
            <person name="Badger J.H."/>
            <person name="Delmas S."/>
            <person name="Haldenby S."/>
            <person name="Madupu R."/>
            <person name="Robinson J."/>
            <person name="Khouri H."/>
            <person name="Ren Q."/>
            <person name="Lowe T.M."/>
            <person name="Maupin-Furlow J."/>
            <person name="Pohlschroder M."/>
            <person name="Daniels C."/>
            <person name="Pfeiffer F."/>
            <person name="Allers T."/>
            <person name="Eisen J.A."/>
        </authorList>
    </citation>
    <scope>NUCLEOTIDE SEQUENCE [LARGE SCALE GENOMIC DNA]</scope>
    <source>
        <strain>ATCC 29605 / DSM 3757 / JCM 8879 / NBRC 14742 / NCIMB 2012 / VKM B-1768 / DS2</strain>
    </source>
</reference>
<reference key="2">
    <citation type="journal article" date="2024" name="Nat. Commun.">
        <title>Identification of structural and regulatory cell-shape determinants in Haloferax volcanii.</title>
        <authorList>
            <person name="Schiller H."/>
            <person name="Hong Y."/>
            <person name="Kouassi J."/>
            <person name="Rados T."/>
            <person name="Kwak J."/>
            <person name="DiLucido A."/>
            <person name="Safer D."/>
            <person name="Marchfelder A."/>
            <person name="Pfeiffer F."/>
            <person name="Bisson A."/>
            <person name="Schulze S."/>
            <person name="Pohlschroder M."/>
        </authorList>
    </citation>
    <scope>FUNCTION IN CELL-SHAPE DETERMINATION</scope>
    <scope>DISRUPTION PHENOTYPE</scope>
    <source>
        <strain>H53</strain>
    </source>
</reference>